<keyword id="KW-0472">Membrane</keyword>
<keyword id="KW-1185">Reference proteome</keyword>
<keyword id="KW-0812">Transmembrane</keyword>
<keyword id="KW-1133">Transmembrane helix</keyword>
<feature type="chain" id="PRO_0000116286" description="Protein U26">
    <location>
        <begin position="1"/>
        <end position="295"/>
    </location>
</feature>
<feature type="transmembrane region" description="Helical" evidence="1">
    <location>
        <begin position="4"/>
        <end position="24"/>
    </location>
</feature>
<feature type="transmembrane region" description="Helical" evidence="1">
    <location>
        <begin position="31"/>
        <end position="51"/>
    </location>
</feature>
<feature type="transmembrane region" description="Helical" evidence="1">
    <location>
        <begin position="66"/>
        <end position="86"/>
    </location>
</feature>
<feature type="transmembrane region" description="Helical" evidence="1">
    <location>
        <begin position="103"/>
        <end position="123"/>
    </location>
</feature>
<feature type="transmembrane region" description="Helical" evidence="1">
    <location>
        <begin position="183"/>
        <end position="203"/>
    </location>
</feature>
<feature type="transmembrane region" description="Helical" evidence="1">
    <location>
        <begin position="218"/>
        <end position="238"/>
    </location>
</feature>
<feature type="transmembrane region" description="Helical" evidence="1">
    <location>
        <begin position="243"/>
        <end position="263"/>
    </location>
</feature>
<feature type="transmembrane region" description="Helical" evidence="1">
    <location>
        <begin position="274"/>
        <end position="294"/>
    </location>
</feature>
<sequence>MRRLTDSFILGLAKGAVIPGLYTFRMTEGRSPLGQIGVLITVAISFLLTFKRFDPRFYKPIGDFKIVFLSLMAPKLPSLLSAVVMICLIFSEMRLRMILSRCVMIMPSYSPAVFTGIMVSLFFKSQMFDDYSVLITAASLLPITVRYGWMIRSSGFLLGLQKYRPILKSTSFREVDLKCLVKFTVEFLLLFTMLWIGKMFLSMPKSNHLFFLTVVNNVFFKLNVFKAAACAVVAILSGLMMNVCLYRIIFEAFVGLGFSSIMLTLSSDLKDRSFYAGDLLNGFFCLVVCCMYFGV</sequence>
<dbReference type="EMBL" id="X83413">
    <property type="protein sequence ID" value="CAA58406.1"/>
    <property type="molecule type" value="Genomic_DNA"/>
</dbReference>
<dbReference type="RefSeq" id="NP_042919.1">
    <property type="nucleotide sequence ID" value="NC_001664.2"/>
</dbReference>
<dbReference type="DNASU" id="1487902"/>
<dbReference type="GeneID" id="1487902"/>
<dbReference type="KEGG" id="vg:1487902"/>
<dbReference type="Proteomes" id="UP000009295">
    <property type="component" value="Segment"/>
</dbReference>
<dbReference type="GO" id="GO:0016020">
    <property type="term" value="C:membrane"/>
    <property type="evidence" value="ECO:0007669"/>
    <property type="project" value="UniProtKB-SubCell"/>
</dbReference>
<dbReference type="InterPro" id="IPR009980">
    <property type="entry name" value="Herpes_U26"/>
</dbReference>
<dbReference type="Pfam" id="PF07402">
    <property type="entry name" value="Herpes_U26"/>
    <property type="match status" value="1"/>
</dbReference>
<comment type="subcellular location">
    <subcellularLocation>
        <location evidence="2">Membrane</location>
        <topology evidence="2">Multi-pass membrane protein</topology>
    </subcellularLocation>
</comment>
<reference key="1">
    <citation type="journal article" date="1995" name="Virology">
        <title>The DNA sequence of human herpesvirus-6: structure, coding content, and genome evolution.</title>
        <authorList>
            <person name="Gompels U.A."/>
            <person name="Nicholas J."/>
            <person name="Lawrence G.L."/>
            <person name="Jones M."/>
            <person name="Thomson B.J."/>
            <person name="Martin M.E.D."/>
            <person name="Efstathiou S."/>
            <person name="Craxton M.A."/>
            <person name="Macaulay H.A."/>
        </authorList>
    </citation>
    <scope>NUCLEOTIDE SEQUENCE [LARGE SCALE GENOMIC DNA]</scope>
</reference>
<evidence type="ECO:0000255" key="1"/>
<evidence type="ECO:0000305" key="2"/>
<accession>P52444</accession>
<protein>
    <recommendedName>
        <fullName>Protein U26</fullName>
    </recommendedName>
</protein>
<proteinExistence type="predicted"/>
<organism>
    <name type="scientific">Human herpesvirus 6A (strain Uganda-1102)</name>
    <name type="common">HHV-6 variant A</name>
    <name type="synonym">Human B lymphotropic virus</name>
    <dbReference type="NCBI Taxonomy" id="10370"/>
    <lineage>
        <taxon>Viruses</taxon>
        <taxon>Duplodnaviria</taxon>
        <taxon>Heunggongvirae</taxon>
        <taxon>Peploviricota</taxon>
        <taxon>Herviviricetes</taxon>
        <taxon>Herpesvirales</taxon>
        <taxon>Orthoherpesviridae</taxon>
        <taxon>Betaherpesvirinae</taxon>
        <taxon>Roseolovirus</taxon>
        <taxon>Roseolovirus humanbeta6a</taxon>
        <taxon>Human betaherpesvirus 6A</taxon>
    </lineage>
</organism>
<organismHost>
    <name type="scientific">Homo sapiens</name>
    <name type="common">Human</name>
    <dbReference type="NCBI Taxonomy" id="9606"/>
</organismHost>
<gene>
    <name type="primary">U26</name>
    <name type="synonym">EPLF2</name>
</gene>
<name>VU26_HHV6U</name>